<gene>
    <name evidence="1" type="primary">rplE</name>
    <name type="ordered locus">Anae109_1923</name>
</gene>
<accession>A7HBN0</accession>
<evidence type="ECO:0000255" key="1">
    <source>
        <dbReference type="HAMAP-Rule" id="MF_01333"/>
    </source>
</evidence>
<evidence type="ECO:0000305" key="2"/>
<feature type="chain" id="PRO_1000052688" description="Large ribosomal subunit protein uL5">
    <location>
        <begin position="1"/>
        <end position="180"/>
    </location>
</feature>
<reference key="1">
    <citation type="journal article" date="2015" name="Genome Announc.">
        <title>Complete genome sequence of Anaeromyxobacter sp. Fw109-5, an anaerobic, metal-reducing bacterium isolated from a contaminated subsurface environment.</title>
        <authorList>
            <person name="Hwang C."/>
            <person name="Copeland A."/>
            <person name="Lucas S."/>
            <person name="Lapidus A."/>
            <person name="Barry K."/>
            <person name="Glavina Del Rio T."/>
            <person name="Dalin E."/>
            <person name="Tice H."/>
            <person name="Pitluck S."/>
            <person name="Sims D."/>
            <person name="Brettin T."/>
            <person name="Bruce D.C."/>
            <person name="Detter J.C."/>
            <person name="Han C.S."/>
            <person name="Schmutz J."/>
            <person name="Larimer F.W."/>
            <person name="Land M.L."/>
            <person name="Hauser L.J."/>
            <person name="Kyrpides N."/>
            <person name="Lykidis A."/>
            <person name="Richardson P."/>
            <person name="Belieav A."/>
            <person name="Sanford R.A."/>
            <person name="Loeffler F.E."/>
            <person name="Fields M.W."/>
        </authorList>
    </citation>
    <scope>NUCLEOTIDE SEQUENCE [LARGE SCALE GENOMIC DNA]</scope>
    <source>
        <strain>Fw109-5</strain>
    </source>
</reference>
<protein>
    <recommendedName>
        <fullName evidence="1">Large ribosomal subunit protein uL5</fullName>
    </recommendedName>
    <alternativeName>
        <fullName evidence="2">50S ribosomal protein L5</fullName>
    </alternativeName>
</protein>
<keyword id="KW-1185">Reference proteome</keyword>
<keyword id="KW-0687">Ribonucleoprotein</keyword>
<keyword id="KW-0689">Ribosomal protein</keyword>
<keyword id="KW-0694">RNA-binding</keyword>
<keyword id="KW-0699">rRNA-binding</keyword>
<keyword id="KW-0820">tRNA-binding</keyword>
<sequence>MAARLRERYEKEIRSELMKELGFANPMQAPKLEKIVVNMGLGEAINNGKIIDASVEQLSAITGQKPVVTKARKSIANFKLRQGQSIGAMVTLRGDRMYEFFDRLVSIALPRVRDFKGVSPKAFDGKGNYTLGVREQIIFPEINYDKVEKIKGMNITVVTTARNDEEGRALLRHLGMPFRQ</sequence>
<organism>
    <name type="scientific">Anaeromyxobacter sp. (strain Fw109-5)</name>
    <dbReference type="NCBI Taxonomy" id="404589"/>
    <lineage>
        <taxon>Bacteria</taxon>
        <taxon>Pseudomonadati</taxon>
        <taxon>Myxococcota</taxon>
        <taxon>Myxococcia</taxon>
        <taxon>Myxococcales</taxon>
        <taxon>Cystobacterineae</taxon>
        <taxon>Anaeromyxobacteraceae</taxon>
        <taxon>Anaeromyxobacter</taxon>
    </lineage>
</organism>
<comment type="function">
    <text evidence="1">This is one of the proteins that bind and probably mediate the attachment of the 5S RNA into the large ribosomal subunit, where it forms part of the central protuberance. In the 70S ribosome it contacts protein S13 of the 30S subunit (bridge B1b), connecting the 2 subunits; this bridge is implicated in subunit movement. Contacts the P site tRNA; the 5S rRNA and some of its associated proteins might help stabilize positioning of ribosome-bound tRNAs.</text>
</comment>
<comment type="subunit">
    <text evidence="1">Part of the 50S ribosomal subunit; part of the 5S rRNA/L5/L18/L25 subcomplex. Contacts the 5S rRNA and the P site tRNA. Forms a bridge to the 30S subunit in the 70S ribosome.</text>
</comment>
<comment type="similarity">
    <text evidence="1">Belongs to the universal ribosomal protein uL5 family.</text>
</comment>
<proteinExistence type="inferred from homology"/>
<dbReference type="EMBL" id="CP000769">
    <property type="protein sequence ID" value="ABS26126.1"/>
    <property type="molecule type" value="Genomic_DNA"/>
</dbReference>
<dbReference type="RefSeq" id="WP_012096705.1">
    <property type="nucleotide sequence ID" value="NC_009675.1"/>
</dbReference>
<dbReference type="SMR" id="A7HBN0"/>
<dbReference type="STRING" id="404589.Anae109_1923"/>
<dbReference type="KEGG" id="afw:Anae109_1923"/>
<dbReference type="eggNOG" id="COG0094">
    <property type="taxonomic scope" value="Bacteria"/>
</dbReference>
<dbReference type="HOGENOM" id="CLU_061015_2_1_7"/>
<dbReference type="OrthoDB" id="9806626at2"/>
<dbReference type="Proteomes" id="UP000006382">
    <property type="component" value="Chromosome"/>
</dbReference>
<dbReference type="GO" id="GO:1990904">
    <property type="term" value="C:ribonucleoprotein complex"/>
    <property type="evidence" value="ECO:0007669"/>
    <property type="project" value="UniProtKB-KW"/>
</dbReference>
<dbReference type="GO" id="GO:0005840">
    <property type="term" value="C:ribosome"/>
    <property type="evidence" value="ECO:0007669"/>
    <property type="project" value="UniProtKB-KW"/>
</dbReference>
<dbReference type="GO" id="GO:0019843">
    <property type="term" value="F:rRNA binding"/>
    <property type="evidence" value="ECO:0007669"/>
    <property type="project" value="UniProtKB-UniRule"/>
</dbReference>
<dbReference type="GO" id="GO:0003735">
    <property type="term" value="F:structural constituent of ribosome"/>
    <property type="evidence" value="ECO:0007669"/>
    <property type="project" value="InterPro"/>
</dbReference>
<dbReference type="GO" id="GO:0000049">
    <property type="term" value="F:tRNA binding"/>
    <property type="evidence" value="ECO:0007669"/>
    <property type="project" value="UniProtKB-UniRule"/>
</dbReference>
<dbReference type="GO" id="GO:0006412">
    <property type="term" value="P:translation"/>
    <property type="evidence" value="ECO:0007669"/>
    <property type="project" value="UniProtKB-UniRule"/>
</dbReference>
<dbReference type="FunFam" id="3.30.1440.10:FF:000001">
    <property type="entry name" value="50S ribosomal protein L5"/>
    <property type="match status" value="1"/>
</dbReference>
<dbReference type="Gene3D" id="3.30.1440.10">
    <property type="match status" value="1"/>
</dbReference>
<dbReference type="HAMAP" id="MF_01333_B">
    <property type="entry name" value="Ribosomal_uL5_B"/>
    <property type="match status" value="1"/>
</dbReference>
<dbReference type="InterPro" id="IPR002132">
    <property type="entry name" value="Ribosomal_uL5"/>
</dbReference>
<dbReference type="InterPro" id="IPR020930">
    <property type="entry name" value="Ribosomal_uL5_bac-type"/>
</dbReference>
<dbReference type="InterPro" id="IPR031309">
    <property type="entry name" value="Ribosomal_uL5_C"/>
</dbReference>
<dbReference type="InterPro" id="IPR020929">
    <property type="entry name" value="Ribosomal_uL5_CS"/>
</dbReference>
<dbReference type="InterPro" id="IPR022803">
    <property type="entry name" value="Ribosomal_uL5_dom_sf"/>
</dbReference>
<dbReference type="InterPro" id="IPR031310">
    <property type="entry name" value="Ribosomal_uL5_N"/>
</dbReference>
<dbReference type="NCBIfam" id="NF000585">
    <property type="entry name" value="PRK00010.1"/>
    <property type="match status" value="1"/>
</dbReference>
<dbReference type="PANTHER" id="PTHR11994">
    <property type="entry name" value="60S RIBOSOMAL PROTEIN L11-RELATED"/>
    <property type="match status" value="1"/>
</dbReference>
<dbReference type="Pfam" id="PF00281">
    <property type="entry name" value="Ribosomal_L5"/>
    <property type="match status" value="1"/>
</dbReference>
<dbReference type="Pfam" id="PF00673">
    <property type="entry name" value="Ribosomal_L5_C"/>
    <property type="match status" value="1"/>
</dbReference>
<dbReference type="PIRSF" id="PIRSF002161">
    <property type="entry name" value="Ribosomal_L5"/>
    <property type="match status" value="1"/>
</dbReference>
<dbReference type="SUPFAM" id="SSF55282">
    <property type="entry name" value="RL5-like"/>
    <property type="match status" value="1"/>
</dbReference>
<dbReference type="PROSITE" id="PS00358">
    <property type="entry name" value="RIBOSOMAL_L5"/>
    <property type="match status" value="1"/>
</dbReference>
<name>RL5_ANADF</name>